<reference key="1">
    <citation type="journal article" date="2000" name="DNA Res.">
        <title>Complete genome structure of the nitrogen-fixing symbiotic bacterium Mesorhizobium loti.</title>
        <authorList>
            <person name="Kaneko T."/>
            <person name="Nakamura Y."/>
            <person name="Sato S."/>
            <person name="Asamizu E."/>
            <person name="Kato T."/>
            <person name="Sasamoto S."/>
            <person name="Watanabe A."/>
            <person name="Idesawa K."/>
            <person name="Ishikawa A."/>
            <person name="Kawashima K."/>
            <person name="Kimura T."/>
            <person name="Kishida Y."/>
            <person name="Kiyokawa C."/>
            <person name="Kohara M."/>
            <person name="Matsumoto M."/>
            <person name="Matsuno A."/>
            <person name="Mochizuki Y."/>
            <person name="Nakayama S."/>
            <person name="Nakazaki N."/>
            <person name="Shimpo S."/>
            <person name="Sugimoto M."/>
            <person name="Takeuchi C."/>
            <person name="Yamada M."/>
            <person name="Tabata S."/>
        </authorList>
    </citation>
    <scope>NUCLEOTIDE SEQUENCE [LARGE SCALE GENOMIC DNA]</scope>
    <source>
        <strain>LMG 29417 / CECT 9101 / MAFF 303099</strain>
    </source>
</reference>
<dbReference type="EC" id="5.3.1.5" evidence="1"/>
<dbReference type="EMBL" id="BA000012">
    <property type="protein sequence ID" value="BAB51553.1"/>
    <property type="molecule type" value="Genomic_DNA"/>
</dbReference>
<dbReference type="RefSeq" id="WP_010912894.1">
    <property type="nucleotide sequence ID" value="NC_002678.2"/>
</dbReference>
<dbReference type="SMR" id="Q98CR8"/>
<dbReference type="KEGG" id="mlo:mlr5036"/>
<dbReference type="PATRIC" id="fig|266835.9.peg.3975"/>
<dbReference type="eggNOG" id="COG2115">
    <property type="taxonomic scope" value="Bacteria"/>
</dbReference>
<dbReference type="HOGENOM" id="CLU_037261_1_0_5"/>
<dbReference type="Proteomes" id="UP000000552">
    <property type="component" value="Chromosome"/>
</dbReference>
<dbReference type="GO" id="GO:0005737">
    <property type="term" value="C:cytoplasm"/>
    <property type="evidence" value="ECO:0007669"/>
    <property type="project" value="UniProtKB-SubCell"/>
</dbReference>
<dbReference type="GO" id="GO:0000287">
    <property type="term" value="F:magnesium ion binding"/>
    <property type="evidence" value="ECO:0007669"/>
    <property type="project" value="UniProtKB-UniRule"/>
</dbReference>
<dbReference type="GO" id="GO:0009045">
    <property type="term" value="F:xylose isomerase activity"/>
    <property type="evidence" value="ECO:0007669"/>
    <property type="project" value="UniProtKB-UniRule"/>
</dbReference>
<dbReference type="GO" id="GO:0042732">
    <property type="term" value="P:D-xylose metabolic process"/>
    <property type="evidence" value="ECO:0007669"/>
    <property type="project" value="UniProtKB-UniRule"/>
</dbReference>
<dbReference type="FunFam" id="3.20.20.150:FF:000002">
    <property type="entry name" value="Xylose isomerase"/>
    <property type="match status" value="1"/>
</dbReference>
<dbReference type="Gene3D" id="3.20.20.150">
    <property type="entry name" value="Divalent-metal-dependent TIM barrel enzymes"/>
    <property type="match status" value="1"/>
</dbReference>
<dbReference type="HAMAP" id="MF_00455">
    <property type="entry name" value="Xylose_isom_A"/>
    <property type="match status" value="1"/>
</dbReference>
<dbReference type="InterPro" id="IPR036237">
    <property type="entry name" value="Xyl_isomerase-like_sf"/>
</dbReference>
<dbReference type="InterPro" id="IPR013022">
    <property type="entry name" value="Xyl_isomerase-like_TIM-brl"/>
</dbReference>
<dbReference type="InterPro" id="IPR013452">
    <property type="entry name" value="Xylose_isom_bac"/>
</dbReference>
<dbReference type="InterPro" id="IPR001998">
    <property type="entry name" value="Xylose_isomerase"/>
</dbReference>
<dbReference type="NCBIfam" id="NF003998">
    <property type="entry name" value="PRK05474.1"/>
    <property type="match status" value="1"/>
</dbReference>
<dbReference type="NCBIfam" id="TIGR02630">
    <property type="entry name" value="xylose_isom_A"/>
    <property type="match status" value="1"/>
</dbReference>
<dbReference type="PANTHER" id="PTHR48408">
    <property type="match status" value="1"/>
</dbReference>
<dbReference type="PANTHER" id="PTHR48408:SF1">
    <property type="entry name" value="XYLOSE ISOMERASE"/>
    <property type="match status" value="1"/>
</dbReference>
<dbReference type="Pfam" id="PF01261">
    <property type="entry name" value="AP_endonuc_2"/>
    <property type="match status" value="1"/>
</dbReference>
<dbReference type="PRINTS" id="PR00688">
    <property type="entry name" value="XYLOSISMRASE"/>
</dbReference>
<dbReference type="SUPFAM" id="SSF51658">
    <property type="entry name" value="Xylose isomerase-like"/>
    <property type="match status" value="1"/>
</dbReference>
<dbReference type="PROSITE" id="PS51415">
    <property type="entry name" value="XYLOSE_ISOMERASE"/>
    <property type="match status" value="1"/>
</dbReference>
<name>XYLA_RHILO</name>
<keyword id="KW-0119">Carbohydrate metabolism</keyword>
<keyword id="KW-0963">Cytoplasm</keyword>
<keyword id="KW-0413">Isomerase</keyword>
<keyword id="KW-0460">Magnesium</keyword>
<keyword id="KW-0479">Metal-binding</keyword>
<keyword id="KW-0859">Xylose metabolism</keyword>
<organism>
    <name type="scientific">Mesorhizobium japonicum (strain LMG 29417 / CECT 9101 / MAFF 303099)</name>
    <name type="common">Mesorhizobium loti (strain MAFF 303099)</name>
    <dbReference type="NCBI Taxonomy" id="266835"/>
    <lineage>
        <taxon>Bacteria</taxon>
        <taxon>Pseudomonadati</taxon>
        <taxon>Pseudomonadota</taxon>
        <taxon>Alphaproteobacteria</taxon>
        <taxon>Hyphomicrobiales</taxon>
        <taxon>Phyllobacteriaceae</taxon>
        <taxon>Mesorhizobium</taxon>
    </lineage>
</organism>
<protein>
    <recommendedName>
        <fullName evidence="1">Xylose isomerase</fullName>
        <ecNumber evidence="1">5.3.1.5</ecNumber>
    </recommendedName>
</protein>
<accession>Q98CR8</accession>
<evidence type="ECO:0000255" key="1">
    <source>
        <dbReference type="HAMAP-Rule" id="MF_00455"/>
    </source>
</evidence>
<proteinExistence type="inferred from homology"/>
<feature type="chain" id="PRO_0000195788" description="Xylose isomerase">
    <location>
        <begin position="1"/>
        <end position="441"/>
    </location>
</feature>
<feature type="active site" evidence="1">
    <location>
        <position position="105"/>
    </location>
</feature>
<feature type="active site" evidence="1">
    <location>
        <position position="108"/>
    </location>
</feature>
<feature type="binding site" evidence="1">
    <location>
        <position position="236"/>
    </location>
    <ligand>
        <name>Mg(2+)</name>
        <dbReference type="ChEBI" id="CHEBI:18420"/>
        <label>1</label>
    </ligand>
</feature>
<feature type="binding site" evidence="1">
    <location>
        <position position="272"/>
    </location>
    <ligand>
        <name>Mg(2+)</name>
        <dbReference type="ChEBI" id="CHEBI:18420"/>
        <label>1</label>
    </ligand>
</feature>
<feature type="binding site" evidence="1">
    <location>
        <position position="272"/>
    </location>
    <ligand>
        <name>Mg(2+)</name>
        <dbReference type="ChEBI" id="CHEBI:18420"/>
        <label>2</label>
    </ligand>
</feature>
<feature type="binding site" evidence="1">
    <location>
        <position position="275"/>
    </location>
    <ligand>
        <name>Mg(2+)</name>
        <dbReference type="ChEBI" id="CHEBI:18420"/>
        <label>2</label>
    </ligand>
</feature>
<feature type="binding site" evidence="1">
    <location>
        <position position="300"/>
    </location>
    <ligand>
        <name>Mg(2+)</name>
        <dbReference type="ChEBI" id="CHEBI:18420"/>
        <label>1</label>
    </ligand>
</feature>
<feature type="binding site" evidence="1">
    <location>
        <position position="311"/>
    </location>
    <ligand>
        <name>Mg(2+)</name>
        <dbReference type="ChEBI" id="CHEBI:18420"/>
        <label>2</label>
    </ligand>
</feature>
<feature type="binding site" evidence="1">
    <location>
        <position position="313"/>
    </location>
    <ligand>
        <name>Mg(2+)</name>
        <dbReference type="ChEBI" id="CHEBI:18420"/>
        <label>2</label>
    </ligand>
</feature>
<feature type="binding site" evidence="1">
    <location>
        <position position="343"/>
    </location>
    <ligand>
        <name>Mg(2+)</name>
        <dbReference type="ChEBI" id="CHEBI:18420"/>
        <label>1</label>
    </ligand>
</feature>
<comment type="catalytic activity">
    <reaction evidence="1">
        <text>alpha-D-xylose = alpha-D-xylulofuranose</text>
        <dbReference type="Rhea" id="RHEA:22816"/>
        <dbReference type="ChEBI" id="CHEBI:28518"/>
        <dbReference type="ChEBI" id="CHEBI:188998"/>
        <dbReference type="EC" id="5.3.1.5"/>
    </reaction>
</comment>
<comment type="cofactor">
    <cofactor evidence="1">
        <name>Mg(2+)</name>
        <dbReference type="ChEBI" id="CHEBI:18420"/>
    </cofactor>
    <text evidence="1">Binds 2 magnesium ions per subunit.</text>
</comment>
<comment type="subunit">
    <text evidence="1">Homotetramer.</text>
</comment>
<comment type="subcellular location">
    <subcellularLocation>
        <location evidence="1">Cytoplasm</location>
    </subcellularLocation>
</comment>
<comment type="similarity">
    <text evidence="1">Belongs to the xylose isomerase family.</text>
</comment>
<sequence>MSSGFFGDIQKIKYEGPDSTNPLAYRFYNPDEVVAGKRLEDHLRFAVAYWHSFAWPGGDPFGGQTFDRPWFPKAGGIDTMELAKLKADVAFEMFSLLGAPYFCFHDADVRPEGKDFSESAARLDEIADYFAGKMKQTGVKLLWGTANLFSHRRFMSGAATNPDPDVFAYAAATVKSCIDVTKRLKGENYVLWGGREGYETLLNTDLAREQEQAGRFLSLVVDYKHKIGFKGTILIEPKPQEPTKHQYDYDVATVYGFLKRFGLEKEVKLNIEQGHAILAGHSFEHELALANALGVFGSIDMNRNDYQSGWDTDQFPNNVPEMALAYYQILQAGGFKTGGTNFDAKLRRQSLDPQDLLIGHIGGMDACARGLKAAARMVEDKALSAPLAERYAGWNSAEGKAMLSGKRTLEDIAERVVKKKIEPQPRSGRQELLENIVNRYV</sequence>
<gene>
    <name evidence="1" type="primary">xylA</name>
    <name type="ordered locus">mlr5036</name>
</gene>